<gene>
    <name evidence="5" type="ORF">PL1_0655</name>
</gene>
<reference key="1">
    <citation type="journal article" date="2011" name="BMC Genomics">
        <title>Updated genome assembly and annotation of Paenibacillus larvae, the agent of American foulbrood disease of honey bees.</title>
        <authorList>
            <person name="Chan Q.W."/>
            <person name="Cornman R.S."/>
            <person name="Birol I."/>
            <person name="Liao N.Y."/>
            <person name="Chan S.K."/>
            <person name="Docking T.R."/>
            <person name="Jackman S.D."/>
            <person name="Taylor G.A."/>
            <person name="Jones S.J."/>
            <person name="de Graaf D.C."/>
            <person name="Evans J.D."/>
            <person name="Foster L.J."/>
        </authorList>
    </citation>
    <scope>NUCLEOTIDE SEQUENCE [LARGE SCALE GENOMIC DNA]</scope>
    <source>
        <strain>NRRL B-3650 / LMG 16245</strain>
    </source>
</reference>
<reference key="2">
    <citation type="journal article" date="2018" name="Microb. Pathog.">
        <title>Functional characterization of the uracil transporter from honeybee pathogen Paenibacillus larvae.</title>
        <authorList>
            <person name="Stoffer-Bittner A.J."/>
            <person name="Alexander C.R."/>
            <person name="Dingman D.W."/>
            <person name="Mourad G.S."/>
            <person name="Schultes N.P."/>
        </authorList>
    </citation>
    <scope>FUNCTION</scope>
    <scope>ACTIVITY REGULATION</scope>
    <scope>BIOPHYSICOCHEMICAL PROPERTIES</scope>
    <source>
        <strain>NRRL B-3650 / LMG 16245</strain>
    </source>
</reference>
<evidence type="ECO:0000255" key="1"/>
<evidence type="ECO:0000269" key="2">
    <source>
    </source>
</evidence>
<evidence type="ECO:0000303" key="3">
    <source>
    </source>
</evidence>
<evidence type="ECO:0000305" key="4"/>
<evidence type="ECO:0000312" key="5">
    <source>
        <dbReference type="EMBL" id="PCK71003.1"/>
    </source>
</evidence>
<organism>
    <name type="scientific">Paenibacillus larvae subsp. larvae (strain NRRL B-3650 / LMG 16245)</name>
    <dbReference type="NCBI Taxonomy" id="741161"/>
    <lineage>
        <taxon>Bacteria</taxon>
        <taxon>Bacillati</taxon>
        <taxon>Bacillota</taxon>
        <taxon>Bacilli</taxon>
        <taxon>Bacillales</taxon>
        <taxon>Paenibacillaceae</taxon>
        <taxon>Paenibacillus</taxon>
    </lineage>
</organism>
<proteinExistence type="evidence at protein level"/>
<feature type="chain" id="PRO_0000446238" description="Uracil permease">
    <location>
        <begin position="1"/>
        <end position="421"/>
    </location>
</feature>
<feature type="transmembrane region" description="Helical" evidence="1">
    <location>
        <begin position="18"/>
        <end position="38"/>
    </location>
</feature>
<feature type="transmembrane region" description="Helical" evidence="1">
    <location>
        <begin position="41"/>
        <end position="61"/>
    </location>
</feature>
<feature type="transmembrane region" description="Helical" evidence="1">
    <location>
        <begin position="65"/>
        <end position="85"/>
    </location>
</feature>
<feature type="transmembrane region" description="Helical" evidence="1">
    <location>
        <begin position="89"/>
        <end position="109"/>
    </location>
</feature>
<feature type="transmembrane region" description="Helical" evidence="1">
    <location>
        <begin position="115"/>
        <end position="135"/>
    </location>
</feature>
<feature type="transmembrane region" description="Helical" evidence="1">
    <location>
        <begin position="160"/>
        <end position="180"/>
    </location>
</feature>
<feature type="transmembrane region" description="Helical" evidence="1">
    <location>
        <begin position="186"/>
        <end position="206"/>
    </location>
</feature>
<feature type="transmembrane region" description="Helical" evidence="1">
    <location>
        <begin position="232"/>
        <end position="252"/>
    </location>
</feature>
<feature type="transmembrane region" description="Helical" evidence="1">
    <location>
        <begin position="304"/>
        <end position="324"/>
    </location>
</feature>
<feature type="transmembrane region" description="Helical" evidence="1">
    <location>
        <begin position="329"/>
        <end position="349"/>
    </location>
</feature>
<feature type="transmembrane region" description="Helical" evidence="1">
    <location>
        <begin position="371"/>
        <end position="391"/>
    </location>
</feature>
<feature type="transmembrane region" description="Helical" evidence="1">
    <location>
        <begin position="393"/>
        <end position="413"/>
    </location>
</feature>
<dbReference type="EMBL" id="ADZY03000173">
    <property type="protein sequence ID" value="PCK71003.1"/>
    <property type="molecule type" value="Genomic_DNA"/>
</dbReference>
<dbReference type="RefSeq" id="WP_023482778.1">
    <property type="nucleotide sequence ID" value="NZ_ADZY03000173.1"/>
</dbReference>
<dbReference type="SMR" id="A0A2A5K1W4"/>
<dbReference type="GO" id="GO:0005886">
    <property type="term" value="C:plasma membrane"/>
    <property type="evidence" value="ECO:0007669"/>
    <property type="project" value="UniProtKB-SubCell"/>
</dbReference>
<dbReference type="GO" id="GO:0042907">
    <property type="term" value="F:xanthine transmembrane transporter activity"/>
    <property type="evidence" value="ECO:0007669"/>
    <property type="project" value="TreeGrafter"/>
</dbReference>
<dbReference type="InterPro" id="IPR006043">
    <property type="entry name" value="NCS2"/>
</dbReference>
<dbReference type="InterPro" id="IPR006042">
    <property type="entry name" value="Xan_ur_permease"/>
</dbReference>
<dbReference type="NCBIfam" id="TIGR00801">
    <property type="entry name" value="ncs2"/>
    <property type="match status" value="1"/>
</dbReference>
<dbReference type="NCBIfam" id="NF007995">
    <property type="entry name" value="PRK10720.1"/>
    <property type="match status" value="1"/>
</dbReference>
<dbReference type="PANTHER" id="PTHR42810">
    <property type="entry name" value="PURINE PERMEASE C1399.01C-RELATED"/>
    <property type="match status" value="1"/>
</dbReference>
<dbReference type="PANTHER" id="PTHR42810:SF4">
    <property type="entry name" value="URIC ACID TRANSPORTER UACT"/>
    <property type="match status" value="1"/>
</dbReference>
<dbReference type="Pfam" id="PF00860">
    <property type="entry name" value="Xan_ur_permease"/>
    <property type="match status" value="1"/>
</dbReference>
<dbReference type="PROSITE" id="PS01116">
    <property type="entry name" value="XANTH_URACIL_PERMASE"/>
    <property type="match status" value="1"/>
</dbReference>
<protein>
    <recommendedName>
        <fullName evidence="4">Uracil permease</fullName>
    </recommendedName>
    <alternativeName>
        <fullName evidence="3">Paenibacillus larvae uracil permease</fullName>
        <shortName evidence="3">PlUP</shortName>
    </alternativeName>
    <alternativeName>
        <fullName evidence="3">Uracil transporter</fullName>
    </alternativeName>
</protein>
<sequence length="421" mass="44684">MKDRVIQVDERLPFLQSIPLSLQHLFAMFGSTVLVPMLLQINPAICLLMNGIGTLIYIFLCKGRIPAYLGSSFAFISPVLIVISTRSYEAALSGFLVVGLVFCLIGLLVKAVGTGWIEIVFPPAAMGAIVAVIGLELAPTAANMAGFVASAGTEGWSPDPKVIAVSLVTLLTAVVGNVMFRGFMKIIPILISIIVGYALAAFLGIVDFSIVREAKWFDLPTFYIMKWDWSSIAIIVPAALVVVAEHIGHLIVTSNIVGKDLSKDPGLDRSLLGNGVSTVISSFVGSTPNTTYGENIGVLALTRVYSIWIIGGAAVMAIVLSFVGKLAALIQTIPVPVMGGVSILLFGVIAGSGVRMLVEAKVDYSNPKNLILTAVVLIIGISGAAFKWGNFEMKGMALATVIAILLGLFFNIIDKLKWSNE</sequence>
<name>URAP_PAELB</name>
<accession>A0A2A5K1W4</accession>
<comment type="function">
    <text evidence="2">Specific for the uptake of uracil. Transport is probably proton-dependent.</text>
</comment>
<comment type="activity regulation">
    <text evidence="2">Inhibited by the proton gradient disruptor carbonyl cyanide m-chlorophenylhydrazone (CCCP), but not by the sodium gradient disruptor ouabain. Both xanthine and uric acid act as competitive inhibitors of uracil transport.</text>
</comment>
<comment type="biophysicochemical properties">
    <kinetics>
        <KM evidence="2">19.5 uM for uracil</KM>
    </kinetics>
</comment>
<comment type="subcellular location">
    <subcellularLocation>
        <location evidence="4">Cell membrane</location>
        <topology evidence="1">Multi-pass membrane protein</topology>
    </subcellularLocation>
</comment>
<comment type="similarity">
    <text evidence="4">Belongs to the nucleobase:cation symporter-2 (NCS2) (TC 2.A.40) family.</text>
</comment>
<keyword id="KW-1003">Cell membrane</keyword>
<keyword id="KW-0472">Membrane</keyword>
<keyword id="KW-0812">Transmembrane</keyword>
<keyword id="KW-1133">Transmembrane helix</keyword>
<keyword id="KW-0813">Transport</keyword>